<keyword id="KW-0045">Antibiotic biosynthesis</keyword>
<keyword id="KW-0408">Iron</keyword>
<keyword id="KW-0479">Metal-binding</keyword>
<keyword id="KW-0560">Oxidoreductase</keyword>
<dbReference type="EC" id="1.14.11.57" evidence="3 7"/>
<dbReference type="EMBL" id="JX508597">
    <property type="protein sequence ID" value="AGN74870.1"/>
    <property type="molecule type" value="Genomic_DNA"/>
</dbReference>
<dbReference type="RefSeq" id="WP_189413854.1">
    <property type="nucleotide sequence ID" value="NZ_BMSM01000002.1"/>
</dbReference>
<dbReference type="SMR" id="R9UTQ8"/>
<dbReference type="GeneID" id="91555190"/>
<dbReference type="GO" id="GO:0016706">
    <property type="term" value="F:2-oxoglutarate-dependent dioxygenase activity"/>
    <property type="evidence" value="ECO:0000314"/>
    <property type="project" value="UniProtKB"/>
</dbReference>
<dbReference type="GO" id="GO:0005506">
    <property type="term" value="F:iron ion binding"/>
    <property type="evidence" value="ECO:0000314"/>
    <property type="project" value="UniProtKB"/>
</dbReference>
<dbReference type="GO" id="GO:0017000">
    <property type="term" value="P:antibiotic biosynthetic process"/>
    <property type="evidence" value="ECO:0007669"/>
    <property type="project" value="UniProtKB-KW"/>
</dbReference>
<dbReference type="GO" id="GO:0016999">
    <property type="term" value="P:antibiotic metabolic process"/>
    <property type="evidence" value="ECO:0000314"/>
    <property type="project" value="UniProtKB"/>
</dbReference>
<dbReference type="Gene3D" id="2.60.120.620">
    <property type="entry name" value="q2cbj1_9rhob like domain"/>
    <property type="match status" value="1"/>
</dbReference>
<dbReference type="InterPro" id="IPR008775">
    <property type="entry name" value="Phytyl_CoA_dOase-like"/>
</dbReference>
<dbReference type="PANTHER" id="PTHR20883:SF48">
    <property type="entry name" value="ECTOINE DIOXYGENASE"/>
    <property type="match status" value="1"/>
</dbReference>
<dbReference type="PANTHER" id="PTHR20883">
    <property type="entry name" value="PHYTANOYL-COA DIOXYGENASE DOMAIN CONTAINING 1"/>
    <property type="match status" value="1"/>
</dbReference>
<dbReference type="Pfam" id="PF05721">
    <property type="entry name" value="PhyH"/>
    <property type="match status" value="1"/>
</dbReference>
<dbReference type="SUPFAM" id="SSF51197">
    <property type="entry name" value="Clavaminate synthase-like"/>
    <property type="match status" value="1"/>
</dbReference>
<proteinExistence type="evidence at protein level"/>
<name>PROHY_STRGD</name>
<evidence type="ECO:0000250" key="1">
    <source>
        <dbReference type="UniProtKB" id="Q2TDY4"/>
    </source>
</evidence>
<evidence type="ECO:0000269" key="2">
    <source>
    </source>
</evidence>
<evidence type="ECO:0000269" key="3">
    <source>
    </source>
</evidence>
<evidence type="ECO:0000303" key="4">
    <source>
    </source>
</evidence>
<evidence type="ECO:0000303" key="5">
    <source>
    </source>
</evidence>
<evidence type="ECO:0000305" key="6"/>
<evidence type="ECO:0000305" key="7">
    <source>
    </source>
</evidence>
<evidence type="ECO:0000305" key="8">
    <source>
    </source>
</evidence>
<protein>
    <recommendedName>
        <fullName evidence="4">L-proline trans-4-hydroxylase</fullName>
        <shortName evidence="5">P4H</shortName>
        <ecNumber evidence="3 7">1.14.11.57</ecNumber>
    </recommendedName>
</protein>
<accession>R9UTQ8</accession>
<comment type="function">
    <text evidence="2 3">Involved in the biosynthesis of the peptidolactone antibiotic etamycin (viridogrisein) (PubMed:6324794, PubMed:8546682). Catalyzes the hydroxylation of free L-proline at the C-4 position to yield trans-4-hydroxy-L-proline (PubMed:6324794, PubMed:8546682).</text>
</comment>
<comment type="catalytic activity">
    <reaction evidence="3 7">
        <text>L-proline + 2-oxoglutarate + O2 = trans-4-hydroxy-L-proline + succinate + CO2</text>
        <dbReference type="Rhea" id="RHEA:51508"/>
        <dbReference type="ChEBI" id="CHEBI:15379"/>
        <dbReference type="ChEBI" id="CHEBI:16526"/>
        <dbReference type="ChEBI" id="CHEBI:16810"/>
        <dbReference type="ChEBI" id="CHEBI:30031"/>
        <dbReference type="ChEBI" id="CHEBI:58375"/>
        <dbReference type="ChEBI" id="CHEBI:60039"/>
        <dbReference type="EC" id="1.14.11.57"/>
    </reaction>
</comment>
<comment type="cofactor">
    <cofactor evidence="2 3">
        <name>Fe(2+)</name>
        <dbReference type="ChEBI" id="CHEBI:29033"/>
    </cofactor>
    <text evidence="1">Binds 1 Fe(2+) ion.</text>
</comment>
<comment type="activity regulation">
    <text evidence="2 3">Competitively inhibited by pyridine-2,4-dicarboxylate (PubMed:8546682). Inhibited by diethyl pyrocarbonate (DEPC), 3,4-dihydroxybenzoate, pyridine-2,5-dicarboxylate, alpha,alpha'-dipyridyl, and some metal ions such as Co(2+) and Zn(2+) (PubMed:6324794, PubMed:8546682).</text>
</comment>
<comment type="biophysicochemical properties">
    <kinetics>
        <KM evidence="3">32 uM for 2-oxoglutarate</KM>
        <KM evidence="3">445 uM for L-proline</KM>
    </kinetics>
    <phDependence>
        <text evidence="2">Optimum pH is 7.5.</text>
    </phDependence>
    <temperatureDependence>
        <text evidence="2">Optimum temperature is 25 degrees Celsius.</text>
    </temperatureDependence>
</comment>
<comment type="pathway">
    <text evidence="8">Antibiotic biosynthesis.</text>
</comment>
<comment type="subunit">
    <text evidence="3">Monomer.</text>
</comment>
<comment type="similarity">
    <text evidence="6">Belongs to the PhyH family.</text>
</comment>
<organism>
    <name type="scientific">Streptomyces griseoviridis</name>
    <dbReference type="NCBI Taxonomy" id="45398"/>
    <lineage>
        <taxon>Bacteria</taxon>
        <taxon>Bacillati</taxon>
        <taxon>Actinomycetota</taxon>
        <taxon>Actinomycetes</taxon>
        <taxon>Kitasatosporales</taxon>
        <taxon>Streptomycetaceae</taxon>
        <taxon>Streptomyces</taxon>
    </lineage>
</organism>
<sequence length="268" mass="29603">MSVSAPLLDAKVRYGRDGWLPLPHTLSDPDVRKLRQRIEGISREQRPEVVLEEGSSAVRALHGCHDFDEVCARLVRLPALVGLAEQLLGGPVYVYQFKVNMKQAHEGAAWPWHQDFAFWHHEDGMGAPDAVNIAIFLDDVTDENGPLEVIPGSQHAGIVEDTARPGRERSHDWRHHVSAKLEYVVPDEIAGRLAGTFGVRRLTGPAGTAVAFHPSIIHSSSNNTSAQRRCVLLITYNRVTNTPAHPVRPPFLVSRDSTPVVPVDADRL</sequence>
<feature type="chain" id="PRO_0000445005" description="L-proline trans-4-hydroxylase">
    <location>
        <begin position="1"/>
        <end position="268"/>
    </location>
</feature>
<feature type="binding site" evidence="1">
    <location>
        <position position="113"/>
    </location>
    <ligand>
        <name>Fe cation</name>
        <dbReference type="ChEBI" id="CHEBI:24875"/>
    </ligand>
</feature>
<feature type="binding site" evidence="1">
    <location>
        <position position="115"/>
    </location>
    <ligand>
        <name>Fe cation</name>
        <dbReference type="ChEBI" id="CHEBI:24875"/>
    </ligand>
</feature>
<feature type="binding site" evidence="1">
    <location>
        <position position="218"/>
    </location>
    <ligand>
        <name>Fe cation</name>
        <dbReference type="ChEBI" id="CHEBI:24875"/>
    </ligand>
</feature>
<reference key="1">
    <citation type="journal article" date="2012" name="ChemBioChem">
        <title>Identification of the biosynthetic gene cluster and regulatory cascade for the synergistic antibacterial antibiotics griseoviridin and viridogrisein in Streptomyces griseoviridis.</title>
        <authorList>
            <person name="Xie Y."/>
            <person name="Wang B."/>
            <person name="Liu J."/>
            <person name="Zhou J."/>
            <person name="Ma J."/>
            <person name="Huang H."/>
            <person name="Ju J."/>
        </authorList>
    </citation>
    <scope>NUCLEOTIDE SEQUENCE [GENOMIC DNA]</scope>
</reference>
<reference key="2">
    <citation type="journal article" date="1984" name="Biochem. Biophys. Res. Commun.">
        <title>Proline hydroxylation by cell free extract of a streptomycete.</title>
        <authorList>
            <person name="Onishi M."/>
            <person name="Okumura Y."/>
            <person name="Okamoto R."/>
            <person name="Ishikura T."/>
        </authorList>
    </citation>
    <scope>FUNCTION</scope>
    <scope>CATALYTIC ACTIVITY</scope>
    <scope>BIOPHYSICOCHEMICAL PROPERTIES</scope>
    <scope>ACTIVITY REGULATION</scope>
    <scope>COFACTOR</scope>
</reference>
<reference key="3">
    <citation type="journal article" date="1996" name="Biochem. J.">
        <title>Purification and initial characterization of proline 4-hydroxylase from Streptomyces griseoviridus P8648: a 2-oxoacid, ferrous-dependent dioxygenase involved in etamycin biosynthesis.</title>
        <authorList>
            <person name="Lawrence C.C."/>
            <person name="Sobey W.J."/>
            <person name="Field R.A."/>
            <person name="Baldwin J.E."/>
            <person name="Schofield C.J."/>
        </authorList>
    </citation>
    <scope>FUNCTION</scope>
    <scope>CATALYTIC ACTIVITY</scope>
    <scope>BIOPHYSICOCHEMICAL PROPERTIES</scope>
    <scope>ACTIVITY REGULATION</scope>
    <scope>COFACTOR</scope>
    <scope>PATHWAY</scope>
    <scope>SUBUNIT</scope>
    <source>
        <strain>P8648</strain>
    </source>
</reference>